<name>NO40_SOYBN</name>
<dbReference type="EMBL" id="X69154">
    <property type="status" value="NOT_ANNOTATED_CDS"/>
    <property type="molecule type" value="mRNA"/>
</dbReference>
<dbReference type="STRING" id="3847.P55960"/>
<dbReference type="InParanoid" id="P55960"/>
<dbReference type="Proteomes" id="UP000008827">
    <property type="component" value="Unplaced"/>
</dbReference>
<dbReference type="GO" id="GO:0009877">
    <property type="term" value="P:nodulation"/>
    <property type="evidence" value="ECO:0007669"/>
    <property type="project" value="UniProtKB-KW"/>
</dbReference>
<dbReference type="InterPro" id="IPR013186">
    <property type="entry name" value="ENOD40"/>
</dbReference>
<dbReference type="Pfam" id="PF08247">
    <property type="entry name" value="ENOD40"/>
    <property type="match status" value="1"/>
</dbReference>
<evidence type="ECO:0000250" key="1"/>
<organism>
    <name type="scientific">Glycine max</name>
    <name type="common">Soybean</name>
    <name type="synonym">Glycine hispida</name>
    <dbReference type="NCBI Taxonomy" id="3847"/>
    <lineage>
        <taxon>Eukaryota</taxon>
        <taxon>Viridiplantae</taxon>
        <taxon>Streptophyta</taxon>
        <taxon>Embryophyta</taxon>
        <taxon>Tracheophyta</taxon>
        <taxon>Spermatophyta</taxon>
        <taxon>Magnoliopsida</taxon>
        <taxon>eudicotyledons</taxon>
        <taxon>Gunneridae</taxon>
        <taxon>Pentapetalae</taxon>
        <taxon>rosids</taxon>
        <taxon>fabids</taxon>
        <taxon>Fabales</taxon>
        <taxon>Fabaceae</taxon>
        <taxon>Papilionoideae</taxon>
        <taxon>50 kb inversion clade</taxon>
        <taxon>NPAAA clade</taxon>
        <taxon>indigoferoid/millettioid clade</taxon>
        <taxon>Phaseoleae</taxon>
        <taxon>Glycine</taxon>
        <taxon>Glycine subgen. Soja</taxon>
    </lineage>
</organism>
<accession>P55960</accession>
<comment type="function">
    <text evidence="1">Modulates the action of auxin, and may function as plant growth regulator that alters phytohormone responses.</text>
</comment>
<comment type="developmental stage">
    <text>Expressed in the early stages of the nodule development.</text>
</comment>
<feature type="peptide" id="PRO_0000044078" description="Early nodulin-40">
    <location>
        <begin position="1"/>
        <end position="12"/>
    </location>
</feature>
<sequence length="12" mass="1391">MELCWLTTIHGS</sequence>
<protein>
    <recommendedName>
        <fullName>Early nodulin-40</fullName>
    </recommendedName>
</protein>
<keyword id="KW-0536">Nodulation</keyword>
<keyword id="KW-1185">Reference proteome</keyword>
<reference key="1">
    <citation type="journal article" date="1993" name="Plant J.">
        <title>Characterization of GmENOD40, a gene showing novel patterns of cell-specific expression during soybean nodule development.</title>
        <authorList>
            <person name="Yang W.C."/>
            <person name="Katinakis P."/>
            <person name="Hendriks P."/>
            <person name="Smolders A."/>
            <person name="de Vries F."/>
            <person name="Spee J."/>
            <person name="van Kammen A."/>
            <person name="Bisseling T."/>
            <person name="Franssen H."/>
        </authorList>
    </citation>
    <scope>NUCLEOTIDE SEQUENCE [MRNA]</scope>
    <source>
        <strain>cv. Williams</strain>
    </source>
</reference>
<proteinExistence type="evidence at transcript level"/>
<gene>
    <name type="primary">ENOD40</name>
</gene>